<protein>
    <recommendedName>
        <fullName evidence="1">Glycine--tRNA ligase beta subunit</fullName>
        <ecNumber evidence="1">6.1.1.14</ecNumber>
    </recommendedName>
    <alternativeName>
        <fullName evidence="1">Glycyl-tRNA synthetase beta subunit</fullName>
        <shortName evidence="1">GlyRS</shortName>
    </alternativeName>
</protein>
<evidence type="ECO:0000255" key="1">
    <source>
        <dbReference type="HAMAP-Rule" id="MF_00255"/>
    </source>
</evidence>
<organism>
    <name type="scientific">Escherichia coli O6:K15:H31 (strain 536 / UPEC)</name>
    <dbReference type="NCBI Taxonomy" id="362663"/>
    <lineage>
        <taxon>Bacteria</taxon>
        <taxon>Pseudomonadati</taxon>
        <taxon>Pseudomonadota</taxon>
        <taxon>Gammaproteobacteria</taxon>
        <taxon>Enterobacterales</taxon>
        <taxon>Enterobacteriaceae</taxon>
        <taxon>Escherichia</taxon>
    </lineage>
</organism>
<proteinExistence type="inferred from homology"/>
<sequence length="689" mass="76813">MSEKTFLVEIGTEELPPKALRSLAESFAANFTAELDNAGLAHGTVQWFAAPRRLALKVANLAEAQPDREIEKRGPAIAQAFDAEGKPSKAAEGWARGCGITVDQAERLTTDKGEWLLYRAHVKGESTEALLPNMVATSLAKLPIPKLMRWGASDVHFVRPVHTVTLLLGDKVIPATILGIQSDRVIRGHRFMGEPEFTIDNADQYPEILRERGKVIADYEERKAKIKADAEEAARKIGGNADLSESLLEEVASLVEWPVVLTAKFEEKFLAVPSEALVYTMKGDQKYFPVYANDGKLLPNFIFVANIESKDPQQIISGNEKVVRPRLADAEFFFNTDRKKRLEDNLPRLQTVLFQQQLGTLRDKTDRIQALAGWIAEQIGADVNHATRAGLLSKCDLMTNMVFEFTDTQGVMGMHYARHDGEAEDVAVALNEQYQPRFAGDDLPSNPVACALAIADKMDTLAGIFGIGQHPKGDKDPFALRRAALGVLRIIVEKNLNLDLQTLTEEAVRLYGDKLTNANVVDDVIDFMLGRFRAWYQDEGYTVDTIQAVLARRPTRPADFDARMKAVSHFRTLEAAAALAAANKRVSNILAKSDEVLSDRVNASTLKEPEEIKLAMQVVVLRDKLEPYFAEGRYQDALVELAELREPVDAFFDKVMVMVDDKELRINRLTMLEKLRELFLRVADISLLQ</sequence>
<dbReference type="EC" id="6.1.1.14" evidence="1"/>
<dbReference type="EMBL" id="CP000247">
    <property type="protein sequence ID" value="ABG71635.1"/>
    <property type="molecule type" value="Genomic_DNA"/>
</dbReference>
<dbReference type="RefSeq" id="WP_001291788.1">
    <property type="nucleotide sequence ID" value="NC_008253.1"/>
</dbReference>
<dbReference type="SMR" id="Q0TBP4"/>
<dbReference type="GeneID" id="75173758"/>
<dbReference type="KEGG" id="ecp:ECP_3661"/>
<dbReference type="HOGENOM" id="CLU_007220_2_2_6"/>
<dbReference type="Proteomes" id="UP000009182">
    <property type="component" value="Chromosome"/>
</dbReference>
<dbReference type="GO" id="GO:0005829">
    <property type="term" value="C:cytosol"/>
    <property type="evidence" value="ECO:0007669"/>
    <property type="project" value="TreeGrafter"/>
</dbReference>
<dbReference type="GO" id="GO:0004814">
    <property type="term" value="F:arginine-tRNA ligase activity"/>
    <property type="evidence" value="ECO:0007669"/>
    <property type="project" value="InterPro"/>
</dbReference>
<dbReference type="GO" id="GO:0005524">
    <property type="term" value="F:ATP binding"/>
    <property type="evidence" value="ECO:0007669"/>
    <property type="project" value="UniProtKB-UniRule"/>
</dbReference>
<dbReference type="GO" id="GO:0004820">
    <property type="term" value="F:glycine-tRNA ligase activity"/>
    <property type="evidence" value="ECO:0007669"/>
    <property type="project" value="UniProtKB-UniRule"/>
</dbReference>
<dbReference type="GO" id="GO:0006420">
    <property type="term" value="P:arginyl-tRNA aminoacylation"/>
    <property type="evidence" value="ECO:0007669"/>
    <property type="project" value="InterPro"/>
</dbReference>
<dbReference type="GO" id="GO:0006426">
    <property type="term" value="P:glycyl-tRNA aminoacylation"/>
    <property type="evidence" value="ECO:0007669"/>
    <property type="project" value="UniProtKB-UniRule"/>
</dbReference>
<dbReference type="HAMAP" id="MF_00255">
    <property type="entry name" value="Gly_tRNA_synth_beta"/>
    <property type="match status" value="1"/>
</dbReference>
<dbReference type="InterPro" id="IPR008909">
    <property type="entry name" value="DALR_anticod-bd"/>
</dbReference>
<dbReference type="InterPro" id="IPR015944">
    <property type="entry name" value="Gly-tRNA-synth_bsu"/>
</dbReference>
<dbReference type="InterPro" id="IPR006194">
    <property type="entry name" value="Gly-tRNA-synth_heterodimer"/>
</dbReference>
<dbReference type="NCBIfam" id="TIGR00211">
    <property type="entry name" value="glyS"/>
    <property type="match status" value="1"/>
</dbReference>
<dbReference type="PANTHER" id="PTHR30075:SF2">
    <property type="entry name" value="GLYCINE--TRNA LIGASE, CHLOROPLASTIC_MITOCHONDRIAL 2"/>
    <property type="match status" value="1"/>
</dbReference>
<dbReference type="PANTHER" id="PTHR30075">
    <property type="entry name" value="GLYCYL-TRNA SYNTHETASE"/>
    <property type="match status" value="1"/>
</dbReference>
<dbReference type="Pfam" id="PF05746">
    <property type="entry name" value="DALR_1"/>
    <property type="match status" value="1"/>
</dbReference>
<dbReference type="Pfam" id="PF02092">
    <property type="entry name" value="tRNA_synt_2f"/>
    <property type="match status" value="1"/>
</dbReference>
<dbReference type="PRINTS" id="PR01045">
    <property type="entry name" value="TRNASYNTHGB"/>
</dbReference>
<dbReference type="SUPFAM" id="SSF109604">
    <property type="entry name" value="HD-domain/PDEase-like"/>
    <property type="match status" value="1"/>
</dbReference>
<dbReference type="PROSITE" id="PS50861">
    <property type="entry name" value="AA_TRNA_LIGASE_II_GLYAB"/>
    <property type="match status" value="1"/>
</dbReference>
<name>SYGB_ECOL5</name>
<comment type="catalytic activity">
    <reaction evidence="1">
        <text>tRNA(Gly) + glycine + ATP = glycyl-tRNA(Gly) + AMP + diphosphate</text>
        <dbReference type="Rhea" id="RHEA:16013"/>
        <dbReference type="Rhea" id="RHEA-COMP:9664"/>
        <dbReference type="Rhea" id="RHEA-COMP:9683"/>
        <dbReference type="ChEBI" id="CHEBI:30616"/>
        <dbReference type="ChEBI" id="CHEBI:33019"/>
        <dbReference type="ChEBI" id="CHEBI:57305"/>
        <dbReference type="ChEBI" id="CHEBI:78442"/>
        <dbReference type="ChEBI" id="CHEBI:78522"/>
        <dbReference type="ChEBI" id="CHEBI:456215"/>
        <dbReference type="EC" id="6.1.1.14"/>
    </reaction>
</comment>
<comment type="subunit">
    <text evidence="1">Tetramer of two alpha and two beta subunits.</text>
</comment>
<comment type="subcellular location">
    <subcellularLocation>
        <location evidence="1">Cytoplasm</location>
    </subcellularLocation>
</comment>
<comment type="similarity">
    <text evidence="1">Belongs to the class-II aminoacyl-tRNA synthetase family.</text>
</comment>
<gene>
    <name evidence="1" type="primary">glyS</name>
    <name type="ordered locus">ECP_3661</name>
</gene>
<feature type="chain" id="PRO_1000006356" description="Glycine--tRNA ligase beta subunit">
    <location>
        <begin position="1"/>
        <end position="689"/>
    </location>
</feature>
<reference key="1">
    <citation type="journal article" date="2006" name="Mol. Microbiol.">
        <title>Role of pathogenicity island-associated integrases in the genome plasticity of uropathogenic Escherichia coli strain 536.</title>
        <authorList>
            <person name="Hochhut B."/>
            <person name="Wilde C."/>
            <person name="Balling G."/>
            <person name="Middendorf B."/>
            <person name="Dobrindt U."/>
            <person name="Brzuszkiewicz E."/>
            <person name="Gottschalk G."/>
            <person name="Carniel E."/>
            <person name="Hacker J."/>
        </authorList>
    </citation>
    <scope>NUCLEOTIDE SEQUENCE [LARGE SCALE GENOMIC DNA]</scope>
    <source>
        <strain>536 / UPEC</strain>
    </source>
</reference>
<keyword id="KW-0030">Aminoacyl-tRNA synthetase</keyword>
<keyword id="KW-0067">ATP-binding</keyword>
<keyword id="KW-0963">Cytoplasm</keyword>
<keyword id="KW-0436">Ligase</keyword>
<keyword id="KW-0547">Nucleotide-binding</keyword>
<keyword id="KW-0648">Protein biosynthesis</keyword>
<accession>Q0TBP4</accession>